<keyword id="KW-1185">Reference proteome</keyword>
<keyword id="KW-0687">Ribonucleoprotein</keyword>
<keyword id="KW-0689">Ribosomal protein</keyword>
<dbReference type="EMBL" id="CP000362">
    <property type="protein sequence ID" value="ABG30950.1"/>
    <property type="molecule type" value="Genomic_DNA"/>
</dbReference>
<dbReference type="RefSeq" id="WP_011567570.1">
    <property type="nucleotide sequence ID" value="NC_008209.1"/>
</dbReference>
<dbReference type="SMR" id="Q16AP3"/>
<dbReference type="STRING" id="375451.RD1_1305"/>
<dbReference type="KEGG" id="rde:RD1_1305"/>
<dbReference type="eggNOG" id="COG0335">
    <property type="taxonomic scope" value="Bacteria"/>
</dbReference>
<dbReference type="HOGENOM" id="CLU_103507_0_2_5"/>
<dbReference type="OrthoDB" id="9803541at2"/>
<dbReference type="Proteomes" id="UP000007029">
    <property type="component" value="Chromosome"/>
</dbReference>
<dbReference type="GO" id="GO:0022625">
    <property type="term" value="C:cytosolic large ribosomal subunit"/>
    <property type="evidence" value="ECO:0007669"/>
    <property type="project" value="TreeGrafter"/>
</dbReference>
<dbReference type="GO" id="GO:0003735">
    <property type="term" value="F:structural constituent of ribosome"/>
    <property type="evidence" value="ECO:0007669"/>
    <property type="project" value="InterPro"/>
</dbReference>
<dbReference type="GO" id="GO:0006412">
    <property type="term" value="P:translation"/>
    <property type="evidence" value="ECO:0007669"/>
    <property type="project" value="UniProtKB-UniRule"/>
</dbReference>
<dbReference type="FunFam" id="2.30.30.790:FF:000001">
    <property type="entry name" value="50S ribosomal protein L19"/>
    <property type="match status" value="1"/>
</dbReference>
<dbReference type="Gene3D" id="2.30.30.790">
    <property type="match status" value="1"/>
</dbReference>
<dbReference type="HAMAP" id="MF_00402">
    <property type="entry name" value="Ribosomal_bL19"/>
    <property type="match status" value="1"/>
</dbReference>
<dbReference type="InterPro" id="IPR001857">
    <property type="entry name" value="Ribosomal_bL19"/>
</dbReference>
<dbReference type="InterPro" id="IPR018257">
    <property type="entry name" value="Ribosomal_bL19_CS"/>
</dbReference>
<dbReference type="InterPro" id="IPR038657">
    <property type="entry name" value="Ribosomal_bL19_sf"/>
</dbReference>
<dbReference type="InterPro" id="IPR008991">
    <property type="entry name" value="Translation_prot_SH3-like_sf"/>
</dbReference>
<dbReference type="NCBIfam" id="TIGR01024">
    <property type="entry name" value="rplS_bact"/>
    <property type="match status" value="1"/>
</dbReference>
<dbReference type="PANTHER" id="PTHR15680:SF9">
    <property type="entry name" value="LARGE RIBOSOMAL SUBUNIT PROTEIN BL19M"/>
    <property type="match status" value="1"/>
</dbReference>
<dbReference type="PANTHER" id="PTHR15680">
    <property type="entry name" value="RIBOSOMAL PROTEIN L19"/>
    <property type="match status" value="1"/>
</dbReference>
<dbReference type="Pfam" id="PF01245">
    <property type="entry name" value="Ribosomal_L19"/>
    <property type="match status" value="1"/>
</dbReference>
<dbReference type="PIRSF" id="PIRSF002191">
    <property type="entry name" value="Ribosomal_L19"/>
    <property type="match status" value="1"/>
</dbReference>
<dbReference type="PRINTS" id="PR00061">
    <property type="entry name" value="RIBOSOMALL19"/>
</dbReference>
<dbReference type="SUPFAM" id="SSF50104">
    <property type="entry name" value="Translation proteins SH3-like domain"/>
    <property type="match status" value="1"/>
</dbReference>
<dbReference type="PROSITE" id="PS01015">
    <property type="entry name" value="RIBOSOMAL_L19"/>
    <property type="match status" value="1"/>
</dbReference>
<organism>
    <name type="scientific">Roseobacter denitrificans (strain ATCC 33942 / OCh 114)</name>
    <name type="common">Erythrobacter sp. (strain OCh 114)</name>
    <name type="synonym">Roseobacter denitrificans</name>
    <dbReference type="NCBI Taxonomy" id="375451"/>
    <lineage>
        <taxon>Bacteria</taxon>
        <taxon>Pseudomonadati</taxon>
        <taxon>Pseudomonadota</taxon>
        <taxon>Alphaproteobacteria</taxon>
        <taxon>Rhodobacterales</taxon>
        <taxon>Roseobacteraceae</taxon>
        <taxon>Roseobacter</taxon>
    </lineage>
</organism>
<gene>
    <name evidence="1" type="primary">rplS</name>
    <name type="ordered locus">RD1_1305</name>
</gene>
<accession>Q16AP3</accession>
<name>RL19_ROSDO</name>
<feature type="chain" id="PRO_0000252539" description="Large ribosomal subunit protein bL19">
    <location>
        <begin position="1"/>
        <end position="127"/>
    </location>
</feature>
<proteinExistence type="inferred from homology"/>
<protein>
    <recommendedName>
        <fullName evidence="1">Large ribosomal subunit protein bL19</fullName>
    </recommendedName>
    <alternativeName>
        <fullName evidence="2">50S ribosomal protein L19</fullName>
    </alternativeName>
</protein>
<comment type="function">
    <text evidence="1">This protein is located at the 30S-50S ribosomal subunit interface and may play a role in the structure and function of the aminoacyl-tRNA binding site.</text>
</comment>
<comment type="similarity">
    <text evidence="1">Belongs to the bacterial ribosomal protein bL19 family.</text>
</comment>
<sequence length="127" mass="14081">MDLIAQIEAEQIAALGKDIPDFRAGDTVRVGFKVTEGTRTRVQNYEGVCIARNNGHGIAGSFTVRKISFGEGVERVFPLHSTNIESITVVRRGRVRRAKLYYLRSRRGKSARIAENTNYKPKSGASV</sequence>
<evidence type="ECO:0000255" key="1">
    <source>
        <dbReference type="HAMAP-Rule" id="MF_00402"/>
    </source>
</evidence>
<evidence type="ECO:0000305" key="2"/>
<reference key="1">
    <citation type="journal article" date="2007" name="J. Bacteriol.">
        <title>The complete genome sequence of Roseobacter denitrificans reveals a mixotrophic rather than photosynthetic metabolism.</title>
        <authorList>
            <person name="Swingley W.D."/>
            <person name="Sadekar S."/>
            <person name="Mastrian S.D."/>
            <person name="Matthies H.J."/>
            <person name="Hao J."/>
            <person name="Ramos H."/>
            <person name="Acharya C.R."/>
            <person name="Conrad A.L."/>
            <person name="Taylor H.L."/>
            <person name="Dejesa L.C."/>
            <person name="Shah M.K."/>
            <person name="O'Huallachain M.E."/>
            <person name="Lince M.T."/>
            <person name="Blankenship R.E."/>
            <person name="Beatty J.T."/>
            <person name="Touchman J.W."/>
        </authorList>
    </citation>
    <scope>NUCLEOTIDE SEQUENCE [LARGE SCALE GENOMIC DNA]</scope>
    <source>
        <strain>ATCC 33942 / OCh 114</strain>
    </source>
</reference>